<proteinExistence type="inferred from homology"/>
<evidence type="ECO:0000255" key="1">
    <source>
        <dbReference type="HAMAP-Rule" id="MF_00175"/>
    </source>
</evidence>
<evidence type="ECO:0000255" key="2">
    <source>
        <dbReference type="PROSITE-ProRule" id="PRU01250"/>
    </source>
</evidence>
<organism>
    <name type="scientific">Psychromonas ingrahamii (strain DSM 17664 / CCUG 51855 / 37)</name>
    <dbReference type="NCBI Taxonomy" id="357804"/>
    <lineage>
        <taxon>Bacteria</taxon>
        <taxon>Pseudomonadati</taxon>
        <taxon>Pseudomonadota</taxon>
        <taxon>Gammaproteobacteria</taxon>
        <taxon>Alteromonadales</taxon>
        <taxon>Psychromonadaceae</taxon>
        <taxon>Psychromonas</taxon>
    </lineage>
</organism>
<sequence length="425" mass="46441">MPNKNDSLLYCSFCGKSQHEVKKLIAGPSVYICNECVDLCDDIIKEEIAEINSASESTTSDKKLPTPHEIRDNLDDYVIGQDTAKKVLSVAVYNHYKRLKHGAISDGVELSKSNILLIGPTGSGKTLLAETMARLLDVPFAMADATTLTEAGYVGEDVENIIQKLLQKCDYDAEKAQHGIIYIDEIDKITRKSENPSITRDVSGEGVQQALLKLIEGTVASIPPQGGRKHPNQEFIQVDTSKILFICGGAFSGLDSVIEQRVDTGTGIGFGATVRDKDSKATISETFQKVLPQDLIKYGLIPEFIGRLPVVATLTELDEHALVEILTAPKNAITKQYAALFGLENVELEFRENALIAMAQKAMGRKTGARGLRSIVEEVLLDTMYDLPSVKNVSKVVIDENVIAGKAKPLLIYSEEQERLASSDK</sequence>
<accession>A1SUW8</accession>
<protein>
    <recommendedName>
        <fullName evidence="1">ATP-dependent Clp protease ATP-binding subunit ClpX</fullName>
    </recommendedName>
</protein>
<keyword id="KW-0067">ATP-binding</keyword>
<keyword id="KW-0143">Chaperone</keyword>
<keyword id="KW-0479">Metal-binding</keyword>
<keyword id="KW-0547">Nucleotide-binding</keyword>
<keyword id="KW-1185">Reference proteome</keyword>
<keyword id="KW-0862">Zinc</keyword>
<reference key="1">
    <citation type="journal article" date="2008" name="BMC Genomics">
        <title>Genomics of an extreme psychrophile, Psychromonas ingrahamii.</title>
        <authorList>
            <person name="Riley M."/>
            <person name="Staley J.T."/>
            <person name="Danchin A."/>
            <person name="Wang T.Z."/>
            <person name="Brettin T.S."/>
            <person name="Hauser L.J."/>
            <person name="Land M.L."/>
            <person name="Thompson L.S."/>
        </authorList>
    </citation>
    <scope>NUCLEOTIDE SEQUENCE [LARGE SCALE GENOMIC DNA]</scope>
    <source>
        <strain>DSM 17664 / CCUG 51855 / 37</strain>
    </source>
</reference>
<comment type="function">
    <text evidence="1">ATP-dependent specificity component of the Clp protease. It directs the protease to specific substrates. Can perform chaperone functions in the absence of ClpP.</text>
</comment>
<comment type="subunit">
    <text evidence="1">Component of the ClpX-ClpP complex. Forms a hexameric ring that, in the presence of ATP, binds to fourteen ClpP subunits assembled into a disk-like structure with a central cavity, resembling the structure of eukaryotic proteasomes.</text>
</comment>
<comment type="similarity">
    <text evidence="1">Belongs to the ClpX chaperone family.</text>
</comment>
<gene>
    <name evidence="1" type="primary">clpX</name>
    <name type="ordered locus">Ping_1466</name>
</gene>
<feature type="chain" id="PRO_1000097986" description="ATP-dependent Clp protease ATP-binding subunit ClpX">
    <location>
        <begin position="1"/>
        <end position="425"/>
    </location>
</feature>
<feature type="domain" description="ClpX-type ZB" evidence="2">
    <location>
        <begin position="1"/>
        <end position="52"/>
    </location>
</feature>
<feature type="binding site" evidence="2">
    <location>
        <position position="11"/>
    </location>
    <ligand>
        <name>Zn(2+)</name>
        <dbReference type="ChEBI" id="CHEBI:29105"/>
    </ligand>
</feature>
<feature type="binding site" evidence="2">
    <location>
        <position position="14"/>
    </location>
    <ligand>
        <name>Zn(2+)</name>
        <dbReference type="ChEBI" id="CHEBI:29105"/>
    </ligand>
</feature>
<feature type="binding site" evidence="2">
    <location>
        <position position="33"/>
    </location>
    <ligand>
        <name>Zn(2+)</name>
        <dbReference type="ChEBI" id="CHEBI:29105"/>
    </ligand>
</feature>
<feature type="binding site" evidence="2">
    <location>
        <position position="36"/>
    </location>
    <ligand>
        <name>Zn(2+)</name>
        <dbReference type="ChEBI" id="CHEBI:29105"/>
    </ligand>
</feature>
<feature type="binding site" evidence="1">
    <location>
        <begin position="120"/>
        <end position="127"/>
    </location>
    <ligand>
        <name>ATP</name>
        <dbReference type="ChEBI" id="CHEBI:30616"/>
    </ligand>
</feature>
<dbReference type="EMBL" id="CP000510">
    <property type="protein sequence ID" value="ABM03283.1"/>
    <property type="molecule type" value="Genomic_DNA"/>
</dbReference>
<dbReference type="RefSeq" id="WP_011769843.1">
    <property type="nucleotide sequence ID" value="NC_008709.1"/>
</dbReference>
<dbReference type="SMR" id="A1SUW8"/>
<dbReference type="STRING" id="357804.Ping_1466"/>
<dbReference type="KEGG" id="pin:Ping_1466"/>
<dbReference type="eggNOG" id="COG1219">
    <property type="taxonomic scope" value="Bacteria"/>
</dbReference>
<dbReference type="HOGENOM" id="CLU_014218_8_2_6"/>
<dbReference type="OrthoDB" id="9804062at2"/>
<dbReference type="Proteomes" id="UP000000639">
    <property type="component" value="Chromosome"/>
</dbReference>
<dbReference type="GO" id="GO:0009376">
    <property type="term" value="C:HslUV protease complex"/>
    <property type="evidence" value="ECO:0007669"/>
    <property type="project" value="TreeGrafter"/>
</dbReference>
<dbReference type="GO" id="GO:0005524">
    <property type="term" value="F:ATP binding"/>
    <property type="evidence" value="ECO:0007669"/>
    <property type="project" value="UniProtKB-UniRule"/>
</dbReference>
<dbReference type="GO" id="GO:0016887">
    <property type="term" value="F:ATP hydrolysis activity"/>
    <property type="evidence" value="ECO:0007669"/>
    <property type="project" value="InterPro"/>
</dbReference>
<dbReference type="GO" id="GO:0140662">
    <property type="term" value="F:ATP-dependent protein folding chaperone"/>
    <property type="evidence" value="ECO:0007669"/>
    <property type="project" value="InterPro"/>
</dbReference>
<dbReference type="GO" id="GO:0046983">
    <property type="term" value="F:protein dimerization activity"/>
    <property type="evidence" value="ECO:0007669"/>
    <property type="project" value="InterPro"/>
</dbReference>
<dbReference type="GO" id="GO:0051082">
    <property type="term" value="F:unfolded protein binding"/>
    <property type="evidence" value="ECO:0007669"/>
    <property type="project" value="UniProtKB-UniRule"/>
</dbReference>
<dbReference type="GO" id="GO:0008270">
    <property type="term" value="F:zinc ion binding"/>
    <property type="evidence" value="ECO:0007669"/>
    <property type="project" value="InterPro"/>
</dbReference>
<dbReference type="GO" id="GO:0051301">
    <property type="term" value="P:cell division"/>
    <property type="evidence" value="ECO:0007669"/>
    <property type="project" value="TreeGrafter"/>
</dbReference>
<dbReference type="GO" id="GO:0051603">
    <property type="term" value="P:proteolysis involved in protein catabolic process"/>
    <property type="evidence" value="ECO:0007669"/>
    <property type="project" value="TreeGrafter"/>
</dbReference>
<dbReference type="CDD" id="cd19497">
    <property type="entry name" value="RecA-like_ClpX"/>
    <property type="match status" value="1"/>
</dbReference>
<dbReference type="FunFam" id="1.10.8.60:FF:000002">
    <property type="entry name" value="ATP-dependent Clp protease ATP-binding subunit ClpX"/>
    <property type="match status" value="1"/>
</dbReference>
<dbReference type="FunFam" id="3.40.50.300:FF:000005">
    <property type="entry name" value="ATP-dependent Clp protease ATP-binding subunit ClpX"/>
    <property type="match status" value="1"/>
</dbReference>
<dbReference type="Gene3D" id="1.10.8.60">
    <property type="match status" value="1"/>
</dbReference>
<dbReference type="Gene3D" id="6.20.220.10">
    <property type="entry name" value="ClpX chaperone, C4-type zinc finger domain"/>
    <property type="match status" value="1"/>
</dbReference>
<dbReference type="Gene3D" id="3.40.50.300">
    <property type="entry name" value="P-loop containing nucleotide triphosphate hydrolases"/>
    <property type="match status" value="1"/>
</dbReference>
<dbReference type="HAMAP" id="MF_00175">
    <property type="entry name" value="ClpX"/>
    <property type="match status" value="1"/>
</dbReference>
<dbReference type="InterPro" id="IPR003593">
    <property type="entry name" value="AAA+_ATPase"/>
</dbReference>
<dbReference type="InterPro" id="IPR050052">
    <property type="entry name" value="ATP-dep_Clp_protease_ClpX"/>
</dbReference>
<dbReference type="InterPro" id="IPR003959">
    <property type="entry name" value="ATPase_AAA_core"/>
</dbReference>
<dbReference type="InterPro" id="IPR019489">
    <property type="entry name" value="Clp_ATPase_C"/>
</dbReference>
<dbReference type="InterPro" id="IPR004487">
    <property type="entry name" value="Clp_protease_ATP-bd_su_ClpX"/>
</dbReference>
<dbReference type="InterPro" id="IPR046425">
    <property type="entry name" value="ClpX_bact"/>
</dbReference>
<dbReference type="InterPro" id="IPR027417">
    <property type="entry name" value="P-loop_NTPase"/>
</dbReference>
<dbReference type="InterPro" id="IPR010603">
    <property type="entry name" value="Znf_CppX_C4"/>
</dbReference>
<dbReference type="InterPro" id="IPR038366">
    <property type="entry name" value="Znf_CppX_C4_sf"/>
</dbReference>
<dbReference type="NCBIfam" id="TIGR00382">
    <property type="entry name" value="clpX"/>
    <property type="match status" value="1"/>
</dbReference>
<dbReference type="NCBIfam" id="NF003745">
    <property type="entry name" value="PRK05342.1"/>
    <property type="match status" value="1"/>
</dbReference>
<dbReference type="PANTHER" id="PTHR48102:SF7">
    <property type="entry name" value="ATP-DEPENDENT CLP PROTEASE ATP-BINDING SUBUNIT CLPX-LIKE, MITOCHONDRIAL"/>
    <property type="match status" value="1"/>
</dbReference>
<dbReference type="PANTHER" id="PTHR48102">
    <property type="entry name" value="ATP-DEPENDENT CLP PROTEASE ATP-BINDING SUBUNIT CLPX-LIKE, MITOCHONDRIAL-RELATED"/>
    <property type="match status" value="1"/>
</dbReference>
<dbReference type="Pfam" id="PF07724">
    <property type="entry name" value="AAA_2"/>
    <property type="match status" value="1"/>
</dbReference>
<dbReference type="Pfam" id="PF10431">
    <property type="entry name" value="ClpB_D2-small"/>
    <property type="match status" value="1"/>
</dbReference>
<dbReference type="Pfam" id="PF06689">
    <property type="entry name" value="zf-C4_ClpX"/>
    <property type="match status" value="1"/>
</dbReference>
<dbReference type="SMART" id="SM00382">
    <property type="entry name" value="AAA"/>
    <property type="match status" value="1"/>
</dbReference>
<dbReference type="SMART" id="SM01086">
    <property type="entry name" value="ClpB_D2-small"/>
    <property type="match status" value="1"/>
</dbReference>
<dbReference type="SMART" id="SM00994">
    <property type="entry name" value="zf-C4_ClpX"/>
    <property type="match status" value="1"/>
</dbReference>
<dbReference type="SUPFAM" id="SSF57716">
    <property type="entry name" value="Glucocorticoid receptor-like (DNA-binding domain)"/>
    <property type="match status" value="1"/>
</dbReference>
<dbReference type="SUPFAM" id="SSF52540">
    <property type="entry name" value="P-loop containing nucleoside triphosphate hydrolases"/>
    <property type="match status" value="1"/>
</dbReference>
<dbReference type="PROSITE" id="PS51902">
    <property type="entry name" value="CLPX_ZB"/>
    <property type="match status" value="1"/>
</dbReference>
<name>CLPX_PSYIN</name>